<organism>
    <name type="scientific">Dictyostelium discoideum</name>
    <name type="common">Social amoeba</name>
    <dbReference type="NCBI Taxonomy" id="44689"/>
    <lineage>
        <taxon>Eukaryota</taxon>
        <taxon>Amoebozoa</taxon>
        <taxon>Evosea</taxon>
        <taxon>Eumycetozoa</taxon>
        <taxon>Dictyostelia</taxon>
        <taxon>Dictyosteliales</taxon>
        <taxon>Dictyosteliaceae</taxon>
        <taxon>Dictyostelium</taxon>
    </lineage>
</organism>
<reference key="1">
    <citation type="journal article" date="2005" name="Nature">
        <title>The genome of the social amoeba Dictyostelium discoideum.</title>
        <authorList>
            <person name="Eichinger L."/>
            <person name="Pachebat J.A."/>
            <person name="Gloeckner G."/>
            <person name="Rajandream M.A."/>
            <person name="Sucgang R."/>
            <person name="Berriman M."/>
            <person name="Song J."/>
            <person name="Olsen R."/>
            <person name="Szafranski K."/>
            <person name="Xu Q."/>
            <person name="Tunggal B."/>
            <person name="Kummerfeld S."/>
            <person name="Madera M."/>
            <person name="Konfortov B.A."/>
            <person name="Rivero F."/>
            <person name="Bankier A.T."/>
            <person name="Lehmann R."/>
            <person name="Hamlin N."/>
            <person name="Davies R."/>
            <person name="Gaudet P."/>
            <person name="Fey P."/>
            <person name="Pilcher K."/>
            <person name="Chen G."/>
            <person name="Saunders D."/>
            <person name="Sodergren E.J."/>
            <person name="Davis P."/>
            <person name="Kerhornou A."/>
            <person name="Nie X."/>
            <person name="Hall N."/>
            <person name="Anjard C."/>
            <person name="Hemphill L."/>
            <person name="Bason N."/>
            <person name="Farbrother P."/>
            <person name="Desany B."/>
            <person name="Just E."/>
            <person name="Morio T."/>
            <person name="Rost R."/>
            <person name="Churcher C.M."/>
            <person name="Cooper J."/>
            <person name="Haydock S."/>
            <person name="van Driessche N."/>
            <person name="Cronin A."/>
            <person name="Goodhead I."/>
            <person name="Muzny D.M."/>
            <person name="Mourier T."/>
            <person name="Pain A."/>
            <person name="Lu M."/>
            <person name="Harper D."/>
            <person name="Lindsay R."/>
            <person name="Hauser H."/>
            <person name="James K.D."/>
            <person name="Quiles M."/>
            <person name="Madan Babu M."/>
            <person name="Saito T."/>
            <person name="Buchrieser C."/>
            <person name="Wardroper A."/>
            <person name="Felder M."/>
            <person name="Thangavelu M."/>
            <person name="Johnson D."/>
            <person name="Knights A."/>
            <person name="Loulseged H."/>
            <person name="Mungall K.L."/>
            <person name="Oliver K."/>
            <person name="Price C."/>
            <person name="Quail M.A."/>
            <person name="Urushihara H."/>
            <person name="Hernandez J."/>
            <person name="Rabbinowitsch E."/>
            <person name="Steffen D."/>
            <person name="Sanders M."/>
            <person name="Ma J."/>
            <person name="Kohara Y."/>
            <person name="Sharp S."/>
            <person name="Simmonds M.N."/>
            <person name="Spiegler S."/>
            <person name="Tivey A."/>
            <person name="Sugano S."/>
            <person name="White B."/>
            <person name="Walker D."/>
            <person name="Woodward J.R."/>
            <person name="Winckler T."/>
            <person name="Tanaka Y."/>
            <person name="Shaulsky G."/>
            <person name="Schleicher M."/>
            <person name="Weinstock G.M."/>
            <person name="Rosenthal A."/>
            <person name="Cox E.C."/>
            <person name="Chisholm R.L."/>
            <person name="Gibbs R.A."/>
            <person name="Loomis W.F."/>
            <person name="Platzer M."/>
            <person name="Kay R.R."/>
            <person name="Williams J.G."/>
            <person name="Dear P.H."/>
            <person name="Noegel A.A."/>
            <person name="Barrell B.G."/>
            <person name="Kuspa A."/>
        </authorList>
    </citation>
    <scope>NUCLEOTIDE SEQUENCE [LARGE SCALE GENOMIC DNA]</scope>
    <source>
        <strain>AX4</strain>
    </source>
</reference>
<gene>
    <name type="ORF">DDB_G0268082</name>
</gene>
<feature type="chain" id="PRO_0000348210" description="Putative uncharacterized protein DDB_G0268082">
    <location>
        <begin position="1"/>
        <end position="97"/>
    </location>
</feature>
<feature type="region of interest" description="Disordered" evidence="1">
    <location>
        <begin position="38"/>
        <end position="97"/>
    </location>
</feature>
<feature type="compositionally biased region" description="Low complexity" evidence="1">
    <location>
        <begin position="56"/>
        <end position="97"/>
    </location>
</feature>
<proteinExistence type="predicted"/>
<evidence type="ECO:0000256" key="1">
    <source>
        <dbReference type="SAM" id="MobiDB-lite"/>
    </source>
</evidence>
<keyword id="KW-1185">Reference proteome</keyword>
<sequence>MAKVFTQLQYYPEAIILAQEVHYSGLKKLILEIKEKTTSPPDWNKFSGKVSINEPTTSKSKSKSTSTSTSTSTSTSTSTSTSSSTSSTSSTTSSINK</sequence>
<protein>
    <recommendedName>
        <fullName>Putative uncharacterized protein DDB_G0268082</fullName>
    </recommendedName>
</protein>
<dbReference type="EMBL" id="AAFI02000003">
    <property type="protein sequence ID" value="EAL73494.1"/>
    <property type="molecule type" value="Genomic_DNA"/>
</dbReference>
<dbReference type="RefSeq" id="XP_647540.1">
    <property type="nucleotide sequence ID" value="XM_642448.1"/>
</dbReference>
<dbReference type="SMR" id="Q55FJ3"/>
<dbReference type="PaxDb" id="44689-DDB0189765"/>
<dbReference type="EnsemblProtists" id="EAL73494">
    <property type="protein sequence ID" value="EAL73494"/>
    <property type="gene ID" value="DDB_G0268082"/>
</dbReference>
<dbReference type="GeneID" id="8616347"/>
<dbReference type="KEGG" id="ddi:DDB_G0268082"/>
<dbReference type="dictyBase" id="DDB_G0268082"/>
<dbReference type="VEuPathDB" id="AmoebaDB:DDB_G0268082"/>
<dbReference type="HOGENOM" id="CLU_2351049_0_0_1"/>
<dbReference type="InParanoid" id="Q55FJ3"/>
<dbReference type="PRO" id="PR:Q55FJ3"/>
<dbReference type="Proteomes" id="UP000002195">
    <property type="component" value="Chromosome 1"/>
</dbReference>
<accession>Q55FJ3</accession>
<name>Y9765_DICDI</name>